<keyword id="KW-0143">Chaperone</keyword>
<keyword id="KW-0963">Cytoplasm</keyword>
<keyword id="KW-0690">Ribosome biogenesis</keyword>
<keyword id="KW-0698">rRNA processing</keyword>
<feature type="chain" id="PRO_1000057114" description="Ribosome maturation factor RimM">
    <location>
        <begin position="1"/>
        <end position="174"/>
    </location>
</feature>
<feature type="domain" description="PRC barrel" evidence="1">
    <location>
        <begin position="98"/>
        <end position="171"/>
    </location>
</feature>
<gene>
    <name evidence="1" type="primary">rimM</name>
    <name type="ordered locus">BPUM_1500</name>
</gene>
<accession>A8FD66</accession>
<dbReference type="EMBL" id="CP000813">
    <property type="protein sequence ID" value="ABV62183.1"/>
    <property type="molecule type" value="Genomic_DNA"/>
</dbReference>
<dbReference type="RefSeq" id="WP_012009938.1">
    <property type="nucleotide sequence ID" value="NZ_VEIS01000003.1"/>
</dbReference>
<dbReference type="SMR" id="A8FD66"/>
<dbReference type="STRING" id="315750.BPUM_1500"/>
<dbReference type="GeneID" id="5620763"/>
<dbReference type="KEGG" id="bpu:BPUM_1500"/>
<dbReference type="eggNOG" id="COG0806">
    <property type="taxonomic scope" value="Bacteria"/>
</dbReference>
<dbReference type="HOGENOM" id="CLU_077636_3_1_9"/>
<dbReference type="OrthoDB" id="9810331at2"/>
<dbReference type="Proteomes" id="UP000001355">
    <property type="component" value="Chromosome"/>
</dbReference>
<dbReference type="GO" id="GO:0005737">
    <property type="term" value="C:cytoplasm"/>
    <property type="evidence" value="ECO:0007669"/>
    <property type="project" value="UniProtKB-SubCell"/>
</dbReference>
<dbReference type="GO" id="GO:0005840">
    <property type="term" value="C:ribosome"/>
    <property type="evidence" value="ECO:0007669"/>
    <property type="project" value="InterPro"/>
</dbReference>
<dbReference type="GO" id="GO:0043022">
    <property type="term" value="F:ribosome binding"/>
    <property type="evidence" value="ECO:0007669"/>
    <property type="project" value="InterPro"/>
</dbReference>
<dbReference type="GO" id="GO:0042274">
    <property type="term" value="P:ribosomal small subunit biogenesis"/>
    <property type="evidence" value="ECO:0007669"/>
    <property type="project" value="UniProtKB-UniRule"/>
</dbReference>
<dbReference type="GO" id="GO:0006364">
    <property type="term" value="P:rRNA processing"/>
    <property type="evidence" value="ECO:0007669"/>
    <property type="project" value="UniProtKB-UniRule"/>
</dbReference>
<dbReference type="Gene3D" id="2.30.30.240">
    <property type="entry name" value="PRC-barrel domain"/>
    <property type="match status" value="1"/>
</dbReference>
<dbReference type="Gene3D" id="2.40.30.60">
    <property type="entry name" value="RimM"/>
    <property type="match status" value="1"/>
</dbReference>
<dbReference type="HAMAP" id="MF_00014">
    <property type="entry name" value="Ribosome_mat_RimM"/>
    <property type="match status" value="1"/>
</dbReference>
<dbReference type="InterPro" id="IPR027275">
    <property type="entry name" value="PRC-brl_dom"/>
</dbReference>
<dbReference type="InterPro" id="IPR011033">
    <property type="entry name" value="PRC_barrel-like_sf"/>
</dbReference>
<dbReference type="InterPro" id="IPR011961">
    <property type="entry name" value="RimM"/>
</dbReference>
<dbReference type="InterPro" id="IPR002676">
    <property type="entry name" value="RimM_N"/>
</dbReference>
<dbReference type="InterPro" id="IPR036976">
    <property type="entry name" value="RimM_N_sf"/>
</dbReference>
<dbReference type="InterPro" id="IPR009000">
    <property type="entry name" value="Transl_B-barrel_sf"/>
</dbReference>
<dbReference type="NCBIfam" id="TIGR02273">
    <property type="entry name" value="16S_RimM"/>
    <property type="match status" value="1"/>
</dbReference>
<dbReference type="PANTHER" id="PTHR33692">
    <property type="entry name" value="RIBOSOME MATURATION FACTOR RIMM"/>
    <property type="match status" value="1"/>
</dbReference>
<dbReference type="PANTHER" id="PTHR33692:SF1">
    <property type="entry name" value="RIBOSOME MATURATION FACTOR RIMM"/>
    <property type="match status" value="1"/>
</dbReference>
<dbReference type="Pfam" id="PF05239">
    <property type="entry name" value="PRC"/>
    <property type="match status" value="1"/>
</dbReference>
<dbReference type="Pfam" id="PF01782">
    <property type="entry name" value="RimM"/>
    <property type="match status" value="1"/>
</dbReference>
<dbReference type="SUPFAM" id="SSF50346">
    <property type="entry name" value="PRC-barrel domain"/>
    <property type="match status" value="1"/>
</dbReference>
<dbReference type="SUPFAM" id="SSF50447">
    <property type="entry name" value="Translation proteins"/>
    <property type="match status" value="1"/>
</dbReference>
<comment type="function">
    <text evidence="1">An accessory protein needed during the final step in the assembly of 30S ribosomal subunit, possibly for assembly of the head region. Essential for efficient processing of 16S rRNA. May be needed both before and after RbfA during the maturation of 16S rRNA. It has affinity for free ribosomal 30S subunits but not for 70S ribosomes.</text>
</comment>
<comment type="subunit">
    <text evidence="1">Binds ribosomal protein uS19.</text>
</comment>
<comment type="subcellular location">
    <subcellularLocation>
        <location evidence="1">Cytoplasm</location>
    </subcellularLocation>
</comment>
<comment type="domain">
    <text evidence="1">The PRC barrel domain binds ribosomal protein uS19.</text>
</comment>
<comment type="similarity">
    <text evidence="1">Belongs to the RimM family.</text>
</comment>
<reference key="1">
    <citation type="journal article" date="2007" name="PLoS ONE">
        <title>Paradoxical DNA repair and peroxide resistance gene conservation in Bacillus pumilus SAFR-032.</title>
        <authorList>
            <person name="Gioia J."/>
            <person name="Yerrapragada S."/>
            <person name="Qin X."/>
            <person name="Jiang H."/>
            <person name="Igboeli O.C."/>
            <person name="Muzny D."/>
            <person name="Dugan-Rocha S."/>
            <person name="Ding Y."/>
            <person name="Hawes A."/>
            <person name="Liu W."/>
            <person name="Perez L."/>
            <person name="Kovar C."/>
            <person name="Dinh H."/>
            <person name="Lee S."/>
            <person name="Nazareth L."/>
            <person name="Blyth P."/>
            <person name="Holder M."/>
            <person name="Buhay C."/>
            <person name="Tirumalai M.R."/>
            <person name="Liu Y."/>
            <person name="Dasgupta I."/>
            <person name="Bokhetache L."/>
            <person name="Fujita M."/>
            <person name="Karouia F."/>
            <person name="Eswara Moorthy P."/>
            <person name="Siefert J."/>
            <person name="Uzman A."/>
            <person name="Buzumbo P."/>
            <person name="Verma A."/>
            <person name="Zwiya H."/>
            <person name="McWilliams B.D."/>
            <person name="Olowu A."/>
            <person name="Clinkenbeard K.D."/>
            <person name="Newcombe D."/>
            <person name="Golebiewski L."/>
            <person name="Petrosino J.F."/>
            <person name="Nicholson W.L."/>
            <person name="Fox G.E."/>
            <person name="Venkateswaran K."/>
            <person name="Highlander S.K."/>
            <person name="Weinstock G.M."/>
        </authorList>
    </citation>
    <scope>NUCLEOTIDE SEQUENCE [LARGE SCALE GENOMIC DNA]</scope>
    <source>
        <strain>SAFR-032</strain>
    </source>
</reference>
<name>RIMM_BACP2</name>
<organism>
    <name type="scientific">Bacillus pumilus (strain SAFR-032)</name>
    <dbReference type="NCBI Taxonomy" id="315750"/>
    <lineage>
        <taxon>Bacteria</taxon>
        <taxon>Bacillati</taxon>
        <taxon>Bacillota</taxon>
        <taxon>Bacilli</taxon>
        <taxon>Bacillales</taxon>
        <taxon>Bacillaceae</taxon>
        <taxon>Bacillus</taxon>
    </lineage>
</organism>
<evidence type="ECO:0000255" key="1">
    <source>
        <dbReference type="HAMAP-Rule" id="MF_00014"/>
    </source>
</evidence>
<proteinExistence type="inferred from homology"/>
<sequence>MEQEWLNVGKIVNTHGVRGEVRVVSKTDFPEERYKKGSVLYIFKQGQGEPLKVTVASHRQHKQFDLLTFEEISSLNEAELLKESILKVEKEHLGSLDEGEFYFHQIIGCEVYDEENQLVGQIKEILTPGANDVWVVGRKGKKDALIPYIPSVVKKIDISSKTIHIEVMEGLIDE</sequence>
<protein>
    <recommendedName>
        <fullName evidence="1">Ribosome maturation factor RimM</fullName>
    </recommendedName>
</protein>